<keyword id="KW-1003">Cell membrane</keyword>
<keyword id="KW-0210">Decarboxylase</keyword>
<keyword id="KW-0444">Lipid biosynthesis</keyword>
<keyword id="KW-0443">Lipid metabolism</keyword>
<keyword id="KW-0456">Lyase</keyword>
<keyword id="KW-0472">Membrane</keyword>
<keyword id="KW-0594">Phospholipid biosynthesis</keyword>
<keyword id="KW-1208">Phospholipid metabolism</keyword>
<keyword id="KW-0670">Pyruvate</keyword>
<keyword id="KW-1185">Reference proteome</keyword>
<keyword id="KW-0865">Zymogen</keyword>
<protein>
    <recommendedName>
        <fullName evidence="1">Phosphatidylserine decarboxylase proenzyme</fullName>
        <ecNumber evidence="1">4.1.1.65</ecNumber>
    </recommendedName>
    <component>
        <recommendedName>
            <fullName evidence="1">Phosphatidylserine decarboxylase alpha chain</fullName>
        </recommendedName>
    </component>
    <component>
        <recommendedName>
            <fullName evidence="1">Phosphatidylserine decarboxylase beta chain</fullName>
        </recommendedName>
    </component>
</protein>
<evidence type="ECO:0000255" key="1">
    <source>
        <dbReference type="HAMAP-Rule" id="MF_00662"/>
    </source>
</evidence>
<reference key="1">
    <citation type="journal article" date="2008" name="J. Bacteriol.">
        <title>The complete genome sequence of Actinobacillus pleuropneumoniae L20 (serotype 5b).</title>
        <authorList>
            <person name="Foote S.J."/>
            <person name="Bosse J.T."/>
            <person name="Bouevitch A.B."/>
            <person name="Langford P.R."/>
            <person name="Young N.M."/>
            <person name="Nash J.H.E."/>
        </authorList>
    </citation>
    <scope>NUCLEOTIDE SEQUENCE [LARGE SCALE GENOMIC DNA]</scope>
    <source>
        <strain>L20</strain>
    </source>
</reference>
<accession>A3N255</accession>
<comment type="function">
    <text evidence="1">Catalyzes the formation of phosphatidylethanolamine (PtdEtn) from phosphatidylserine (PtdSer).</text>
</comment>
<comment type="catalytic activity">
    <reaction evidence="1">
        <text>a 1,2-diacyl-sn-glycero-3-phospho-L-serine + H(+) = a 1,2-diacyl-sn-glycero-3-phosphoethanolamine + CO2</text>
        <dbReference type="Rhea" id="RHEA:20828"/>
        <dbReference type="ChEBI" id="CHEBI:15378"/>
        <dbReference type="ChEBI" id="CHEBI:16526"/>
        <dbReference type="ChEBI" id="CHEBI:57262"/>
        <dbReference type="ChEBI" id="CHEBI:64612"/>
        <dbReference type="EC" id="4.1.1.65"/>
    </reaction>
</comment>
<comment type="cofactor">
    <cofactor evidence="1">
        <name>pyruvate</name>
        <dbReference type="ChEBI" id="CHEBI:15361"/>
    </cofactor>
    <text evidence="1">Binds 1 pyruvoyl group covalently per subunit.</text>
</comment>
<comment type="pathway">
    <text evidence="1">Phospholipid metabolism; phosphatidylethanolamine biosynthesis; phosphatidylethanolamine from CDP-diacylglycerol: step 2/2.</text>
</comment>
<comment type="subunit">
    <text evidence="1">Heterodimer of a large membrane-associated beta subunit and a small pyruvoyl-containing alpha subunit.</text>
</comment>
<comment type="subcellular location">
    <subcellularLocation>
        <location evidence="1">Cell membrane</location>
        <topology evidence="1">Peripheral membrane protein</topology>
    </subcellularLocation>
</comment>
<comment type="PTM">
    <text evidence="1">Is synthesized initially as an inactive proenzyme. Formation of the active enzyme involves a self-maturation process in which the active site pyruvoyl group is generated from an internal serine residue via an autocatalytic post-translational modification. Two non-identical subunits are generated from the proenzyme in this reaction, and the pyruvate is formed at the N-terminus of the alpha chain, which is derived from the carboxyl end of the proenzyme. The autoendoproteolytic cleavage occurs by a canonical serine protease mechanism, in which the side chain hydroxyl group of the serine supplies its oxygen atom to form the C-terminus of the beta chain, while the remainder of the serine residue undergoes an oxidative deamination to produce ammonia and the pyruvoyl prosthetic group on the alpha chain. During this reaction, the Ser that is part of the protease active site of the proenzyme becomes the pyruvoyl prosthetic group, which constitutes an essential element of the active site of the mature decarboxylase.</text>
</comment>
<comment type="similarity">
    <text evidence="1">Belongs to the phosphatidylserine decarboxylase family. PSD-B subfamily. Prokaryotic type I sub-subfamily.</text>
</comment>
<feature type="chain" id="PRO_1000026534" description="Phosphatidylserine decarboxylase beta chain" evidence="1">
    <location>
        <begin position="1"/>
        <end position="262"/>
    </location>
</feature>
<feature type="chain" id="PRO_1000026535" description="Phosphatidylserine decarboxylase alpha chain" evidence="1">
    <location>
        <begin position="263"/>
        <end position="297"/>
    </location>
</feature>
<feature type="active site" description="Charge relay system; for autoendoproteolytic cleavage activity" evidence="1">
    <location>
        <position position="100"/>
    </location>
</feature>
<feature type="active site" description="Charge relay system; for autoendoproteolytic cleavage activity" evidence="1">
    <location>
        <position position="157"/>
    </location>
</feature>
<feature type="active site" description="Charge relay system; for autoendoproteolytic cleavage activity" evidence="1">
    <location>
        <position position="263"/>
    </location>
</feature>
<feature type="active site" description="Schiff-base intermediate with substrate; via pyruvic acid; for decarboxylase activity" evidence="1">
    <location>
        <position position="263"/>
    </location>
</feature>
<feature type="site" description="Cleavage (non-hydrolytic); by autocatalysis" evidence="1">
    <location>
        <begin position="262"/>
        <end position="263"/>
    </location>
</feature>
<feature type="modified residue" description="Pyruvic acid (Ser); by autocatalysis" evidence="1">
    <location>
        <position position="263"/>
    </location>
</feature>
<gene>
    <name evidence="1" type="primary">psd</name>
    <name type="ordered locus">APL_1407</name>
</gene>
<dbReference type="EC" id="4.1.1.65" evidence="1"/>
<dbReference type="EMBL" id="CP000569">
    <property type="protein sequence ID" value="ABN74491.1"/>
    <property type="molecule type" value="Genomic_DNA"/>
</dbReference>
<dbReference type="RefSeq" id="WP_005612934.1">
    <property type="nucleotide sequence ID" value="NC_009053.1"/>
</dbReference>
<dbReference type="SMR" id="A3N255"/>
<dbReference type="STRING" id="416269.APL_1407"/>
<dbReference type="EnsemblBacteria" id="ABN74491">
    <property type="protein sequence ID" value="ABN74491"/>
    <property type="gene ID" value="APL_1407"/>
</dbReference>
<dbReference type="KEGG" id="apl:APL_1407"/>
<dbReference type="eggNOG" id="COG0688">
    <property type="taxonomic scope" value="Bacteria"/>
</dbReference>
<dbReference type="HOGENOM" id="CLU_029061_4_1_6"/>
<dbReference type="UniPathway" id="UPA00558">
    <property type="reaction ID" value="UER00616"/>
</dbReference>
<dbReference type="Proteomes" id="UP000001432">
    <property type="component" value="Chromosome"/>
</dbReference>
<dbReference type="GO" id="GO:0005886">
    <property type="term" value="C:plasma membrane"/>
    <property type="evidence" value="ECO:0007669"/>
    <property type="project" value="UniProtKB-SubCell"/>
</dbReference>
<dbReference type="GO" id="GO:0004609">
    <property type="term" value="F:phosphatidylserine decarboxylase activity"/>
    <property type="evidence" value="ECO:0007669"/>
    <property type="project" value="UniProtKB-UniRule"/>
</dbReference>
<dbReference type="GO" id="GO:0006646">
    <property type="term" value="P:phosphatidylethanolamine biosynthetic process"/>
    <property type="evidence" value="ECO:0007669"/>
    <property type="project" value="UniProtKB-UniRule"/>
</dbReference>
<dbReference type="HAMAP" id="MF_00662">
    <property type="entry name" value="PS_decarb_PSD_B_type1"/>
    <property type="match status" value="1"/>
</dbReference>
<dbReference type="InterPro" id="IPR003817">
    <property type="entry name" value="PS_Dcarbxylase"/>
</dbReference>
<dbReference type="InterPro" id="IPR033177">
    <property type="entry name" value="PSD-B"/>
</dbReference>
<dbReference type="InterPro" id="IPR033178">
    <property type="entry name" value="PSD_type1_pro"/>
</dbReference>
<dbReference type="NCBIfam" id="TIGR00163">
    <property type="entry name" value="PS_decarb"/>
    <property type="match status" value="1"/>
</dbReference>
<dbReference type="PANTHER" id="PTHR10067">
    <property type="entry name" value="PHOSPHATIDYLSERINE DECARBOXYLASE"/>
    <property type="match status" value="1"/>
</dbReference>
<dbReference type="PANTHER" id="PTHR10067:SF6">
    <property type="entry name" value="PHOSPHATIDYLSERINE DECARBOXYLASE PROENZYME, MITOCHONDRIAL"/>
    <property type="match status" value="1"/>
</dbReference>
<dbReference type="Pfam" id="PF02666">
    <property type="entry name" value="PS_Dcarbxylase"/>
    <property type="match status" value="1"/>
</dbReference>
<name>PSD_ACTP2</name>
<sequence length="297" mass="33753">MSLKPYATPTYWQRVKVAFQYIFPQLPVTRLAGWLAEQKWGAVTHFIIRTFAKQYKVNLSEAQKSNASDYATFNEFFIRPLKENARPINQDAQALCLPADGKVSESGKIEDDRLLQAKGHFFTLETLLANDQEMANKFKDGHFITTYLSPRDYHRVHMPCDATLRKMIYVPGELFSVNPFLAEHVPNLFARNERVICEFETEFGPMVQILVGATITASMSTVWAGIINPPRTKEVVEYHYETSGETAVHLKKGQEMGAFRLGSTVINLFPKDSVEFEAHLQAGVETRMGERLAKIVK</sequence>
<organism>
    <name type="scientific">Actinobacillus pleuropneumoniae serotype 5b (strain L20)</name>
    <dbReference type="NCBI Taxonomy" id="416269"/>
    <lineage>
        <taxon>Bacteria</taxon>
        <taxon>Pseudomonadati</taxon>
        <taxon>Pseudomonadota</taxon>
        <taxon>Gammaproteobacteria</taxon>
        <taxon>Pasteurellales</taxon>
        <taxon>Pasteurellaceae</taxon>
        <taxon>Actinobacillus</taxon>
    </lineage>
</organism>
<proteinExistence type="inferred from homology"/>